<name>RL14_LACLA</name>
<accession>Q9CDX2</accession>
<dbReference type="EMBL" id="AE005176">
    <property type="protein sequence ID" value="AAK06187.1"/>
    <property type="molecule type" value="Genomic_DNA"/>
</dbReference>
<dbReference type="PIR" id="A86886">
    <property type="entry name" value="A86886"/>
</dbReference>
<dbReference type="RefSeq" id="NP_268246.1">
    <property type="nucleotide sequence ID" value="NC_002662.1"/>
</dbReference>
<dbReference type="RefSeq" id="WP_003129953.1">
    <property type="nucleotide sequence ID" value="NC_002662.1"/>
</dbReference>
<dbReference type="SMR" id="Q9CDX2"/>
<dbReference type="PaxDb" id="272623-L0410"/>
<dbReference type="EnsemblBacteria" id="AAK06187">
    <property type="protein sequence ID" value="AAK06187"/>
    <property type="gene ID" value="L0410"/>
</dbReference>
<dbReference type="GeneID" id="89634436"/>
<dbReference type="KEGG" id="lla:L0410"/>
<dbReference type="PATRIC" id="fig|272623.7.peg.2248"/>
<dbReference type="eggNOG" id="COG0093">
    <property type="taxonomic scope" value="Bacteria"/>
</dbReference>
<dbReference type="HOGENOM" id="CLU_095071_2_1_9"/>
<dbReference type="OrthoDB" id="9806379at2"/>
<dbReference type="Proteomes" id="UP000002196">
    <property type="component" value="Chromosome"/>
</dbReference>
<dbReference type="GO" id="GO:0022625">
    <property type="term" value="C:cytosolic large ribosomal subunit"/>
    <property type="evidence" value="ECO:0007669"/>
    <property type="project" value="TreeGrafter"/>
</dbReference>
<dbReference type="GO" id="GO:0070180">
    <property type="term" value="F:large ribosomal subunit rRNA binding"/>
    <property type="evidence" value="ECO:0007669"/>
    <property type="project" value="TreeGrafter"/>
</dbReference>
<dbReference type="GO" id="GO:0003735">
    <property type="term" value="F:structural constituent of ribosome"/>
    <property type="evidence" value="ECO:0007669"/>
    <property type="project" value="InterPro"/>
</dbReference>
<dbReference type="GO" id="GO:0006412">
    <property type="term" value="P:translation"/>
    <property type="evidence" value="ECO:0007669"/>
    <property type="project" value="UniProtKB-UniRule"/>
</dbReference>
<dbReference type="CDD" id="cd00337">
    <property type="entry name" value="Ribosomal_uL14"/>
    <property type="match status" value="1"/>
</dbReference>
<dbReference type="FunFam" id="2.40.150.20:FF:000001">
    <property type="entry name" value="50S ribosomal protein L14"/>
    <property type="match status" value="1"/>
</dbReference>
<dbReference type="Gene3D" id="2.40.150.20">
    <property type="entry name" value="Ribosomal protein L14"/>
    <property type="match status" value="1"/>
</dbReference>
<dbReference type="HAMAP" id="MF_01367">
    <property type="entry name" value="Ribosomal_uL14"/>
    <property type="match status" value="1"/>
</dbReference>
<dbReference type="InterPro" id="IPR000218">
    <property type="entry name" value="Ribosomal_uL14"/>
</dbReference>
<dbReference type="InterPro" id="IPR005745">
    <property type="entry name" value="Ribosomal_uL14_bac-type"/>
</dbReference>
<dbReference type="InterPro" id="IPR019972">
    <property type="entry name" value="Ribosomal_uL14_CS"/>
</dbReference>
<dbReference type="InterPro" id="IPR036853">
    <property type="entry name" value="Ribosomal_uL14_sf"/>
</dbReference>
<dbReference type="NCBIfam" id="TIGR01067">
    <property type="entry name" value="rplN_bact"/>
    <property type="match status" value="1"/>
</dbReference>
<dbReference type="PANTHER" id="PTHR11761">
    <property type="entry name" value="50S/60S RIBOSOMAL PROTEIN L14/L23"/>
    <property type="match status" value="1"/>
</dbReference>
<dbReference type="PANTHER" id="PTHR11761:SF3">
    <property type="entry name" value="LARGE RIBOSOMAL SUBUNIT PROTEIN UL14M"/>
    <property type="match status" value="1"/>
</dbReference>
<dbReference type="Pfam" id="PF00238">
    <property type="entry name" value="Ribosomal_L14"/>
    <property type="match status" value="1"/>
</dbReference>
<dbReference type="SMART" id="SM01374">
    <property type="entry name" value="Ribosomal_L14"/>
    <property type="match status" value="1"/>
</dbReference>
<dbReference type="SUPFAM" id="SSF50193">
    <property type="entry name" value="Ribosomal protein L14"/>
    <property type="match status" value="1"/>
</dbReference>
<dbReference type="PROSITE" id="PS00049">
    <property type="entry name" value="RIBOSOMAL_L14"/>
    <property type="match status" value="1"/>
</dbReference>
<gene>
    <name evidence="1" type="primary">rplN</name>
    <name type="ordered locus">LL2089</name>
    <name type="ORF">L0410</name>
</gene>
<sequence>MIQTESRLKVADNSGAKELLTIRVLGGSSRKFAGIGDIVVATVKSAAPGGAVKKGEVVKAVIVRTKSGAKRPDGSYIKFDENAAVLIRDDKTPRGTRIFGPVARELREGGYMKIVSLAPEVL</sequence>
<reference key="1">
    <citation type="journal article" date="2001" name="Genome Res.">
        <title>The complete genome sequence of the lactic acid bacterium Lactococcus lactis ssp. lactis IL1403.</title>
        <authorList>
            <person name="Bolotin A."/>
            <person name="Wincker P."/>
            <person name="Mauger S."/>
            <person name="Jaillon O."/>
            <person name="Malarme K."/>
            <person name="Weissenbach J."/>
            <person name="Ehrlich S.D."/>
            <person name="Sorokin A."/>
        </authorList>
    </citation>
    <scope>NUCLEOTIDE SEQUENCE [LARGE SCALE GENOMIC DNA]</scope>
    <source>
        <strain>IL1403</strain>
    </source>
</reference>
<evidence type="ECO:0000255" key="1">
    <source>
        <dbReference type="HAMAP-Rule" id="MF_01367"/>
    </source>
</evidence>
<evidence type="ECO:0000305" key="2"/>
<proteinExistence type="inferred from homology"/>
<comment type="function">
    <text evidence="1">Binds to 23S rRNA. Forms part of two intersubunit bridges in the 70S ribosome.</text>
</comment>
<comment type="subunit">
    <text evidence="1">Part of the 50S ribosomal subunit. Forms a cluster with proteins L3 and L19. In the 70S ribosome, L14 and L19 interact and together make contacts with the 16S rRNA in bridges B5 and B8.</text>
</comment>
<comment type="similarity">
    <text evidence="1">Belongs to the universal ribosomal protein uL14 family.</text>
</comment>
<keyword id="KW-1185">Reference proteome</keyword>
<keyword id="KW-0687">Ribonucleoprotein</keyword>
<keyword id="KW-0689">Ribosomal protein</keyword>
<keyword id="KW-0694">RNA-binding</keyword>
<keyword id="KW-0699">rRNA-binding</keyword>
<feature type="chain" id="PRO_1000055608" description="Large ribosomal subunit protein uL14">
    <location>
        <begin position="1"/>
        <end position="122"/>
    </location>
</feature>
<organism>
    <name type="scientific">Lactococcus lactis subsp. lactis (strain IL1403)</name>
    <name type="common">Streptococcus lactis</name>
    <dbReference type="NCBI Taxonomy" id="272623"/>
    <lineage>
        <taxon>Bacteria</taxon>
        <taxon>Bacillati</taxon>
        <taxon>Bacillota</taxon>
        <taxon>Bacilli</taxon>
        <taxon>Lactobacillales</taxon>
        <taxon>Streptococcaceae</taxon>
        <taxon>Lactococcus</taxon>
    </lineage>
</organism>
<protein>
    <recommendedName>
        <fullName evidence="1">Large ribosomal subunit protein uL14</fullName>
    </recommendedName>
    <alternativeName>
        <fullName evidence="2">50S ribosomal protein L14</fullName>
    </alternativeName>
</protein>